<proteinExistence type="inferred from homology"/>
<evidence type="ECO:0000255" key="1">
    <source>
        <dbReference type="HAMAP-Rule" id="MF_00216"/>
    </source>
</evidence>
<organism>
    <name type="scientific">Haloquadratum walsbyi (strain DSM 16790 / HBSQ001)</name>
    <dbReference type="NCBI Taxonomy" id="362976"/>
    <lineage>
        <taxon>Archaea</taxon>
        <taxon>Methanobacteriati</taxon>
        <taxon>Methanobacteriota</taxon>
        <taxon>Stenosarchaea group</taxon>
        <taxon>Halobacteria</taxon>
        <taxon>Halobacteriales</taxon>
        <taxon>Haloferacaceae</taxon>
        <taxon>Haloquadratum</taxon>
    </lineage>
</organism>
<protein>
    <recommendedName>
        <fullName evidence="1">Translation initiation factor 1A 1</fullName>
        <shortName evidence="1">aIF-1A 1</shortName>
    </recommendedName>
</protein>
<reference key="1">
    <citation type="journal article" date="2006" name="BMC Genomics">
        <title>The genome of the square archaeon Haloquadratum walsbyi: life at the limits of water activity.</title>
        <authorList>
            <person name="Bolhuis H."/>
            <person name="Palm P."/>
            <person name="Wende A."/>
            <person name="Falb M."/>
            <person name="Rampp M."/>
            <person name="Rodriguez-Valera F."/>
            <person name="Pfeiffer F."/>
            <person name="Oesterhelt D."/>
        </authorList>
    </citation>
    <scope>NUCLEOTIDE SEQUENCE [LARGE SCALE GENOMIC DNA]</scope>
    <source>
        <strain>DSM 16790 / HBSQ001</strain>
    </source>
</reference>
<name>IF1A1_HALWD</name>
<feature type="chain" id="PRO_0000259364" description="Translation initiation factor 1A 1">
    <location>
        <begin position="1"/>
        <end position="96"/>
    </location>
</feature>
<feature type="domain" description="S1-like" evidence="1">
    <location>
        <begin position="8"/>
        <end position="82"/>
    </location>
</feature>
<dbReference type="EMBL" id="AM180088">
    <property type="protein sequence ID" value="CAJ53496.1"/>
    <property type="molecule type" value="Genomic_DNA"/>
</dbReference>
<dbReference type="SMR" id="Q18EX1"/>
<dbReference type="STRING" id="362976.HQ_3399A"/>
<dbReference type="GeneID" id="4194779"/>
<dbReference type="KEGG" id="hwa:HQ_3399A"/>
<dbReference type="eggNOG" id="arCOG01179">
    <property type="taxonomic scope" value="Archaea"/>
</dbReference>
<dbReference type="HOGENOM" id="CLU_109098_1_2_2"/>
<dbReference type="Proteomes" id="UP000001975">
    <property type="component" value="Chromosome"/>
</dbReference>
<dbReference type="GO" id="GO:0003723">
    <property type="term" value="F:RNA binding"/>
    <property type="evidence" value="ECO:0007669"/>
    <property type="project" value="InterPro"/>
</dbReference>
<dbReference type="GO" id="GO:0003743">
    <property type="term" value="F:translation initiation factor activity"/>
    <property type="evidence" value="ECO:0007669"/>
    <property type="project" value="UniProtKB-UniRule"/>
</dbReference>
<dbReference type="CDD" id="cd05793">
    <property type="entry name" value="S1_IF1A"/>
    <property type="match status" value="1"/>
</dbReference>
<dbReference type="Gene3D" id="2.40.50.140">
    <property type="entry name" value="Nucleic acid-binding proteins"/>
    <property type="match status" value="1"/>
</dbReference>
<dbReference type="HAMAP" id="MF_00216">
    <property type="entry name" value="aIF_1A"/>
    <property type="match status" value="1"/>
</dbReference>
<dbReference type="InterPro" id="IPR012340">
    <property type="entry name" value="NA-bd_OB-fold"/>
</dbReference>
<dbReference type="InterPro" id="IPR006196">
    <property type="entry name" value="RNA-binding_domain_S1_IF1"/>
</dbReference>
<dbReference type="InterPro" id="IPR001253">
    <property type="entry name" value="TIF_eIF-1A"/>
</dbReference>
<dbReference type="InterPro" id="IPR018104">
    <property type="entry name" value="TIF_eIF-1A_CS"/>
</dbReference>
<dbReference type="NCBIfam" id="TIGR00523">
    <property type="entry name" value="eIF-1A"/>
    <property type="match status" value="1"/>
</dbReference>
<dbReference type="NCBIfam" id="NF003082">
    <property type="entry name" value="PRK04012.1-1"/>
    <property type="match status" value="1"/>
</dbReference>
<dbReference type="NCBIfam" id="NF003083">
    <property type="entry name" value="PRK04012.1-2"/>
    <property type="match status" value="1"/>
</dbReference>
<dbReference type="NCBIfam" id="NF003084">
    <property type="entry name" value="PRK04012.1-3"/>
    <property type="match status" value="1"/>
</dbReference>
<dbReference type="NCBIfam" id="NF003085">
    <property type="entry name" value="PRK04012.1-5"/>
    <property type="match status" value="1"/>
</dbReference>
<dbReference type="PANTHER" id="PTHR21668">
    <property type="entry name" value="EIF-1A"/>
    <property type="match status" value="1"/>
</dbReference>
<dbReference type="Pfam" id="PF01176">
    <property type="entry name" value="eIF-1a"/>
    <property type="match status" value="1"/>
</dbReference>
<dbReference type="SMART" id="SM00652">
    <property type="entry name" value="eIF1a"/>
    <property type="match status" value="1"/>
</dbReference>
<dbReference type="SUPFAM" id="SSF50249">
    <property type="entry name" value="Nucleic acid-binding proteins"/>
    <property type="match status" value="1"/>
</dbReference>
<dbReference type="PROSITE" id="PS01262">
    <property type="entry name" value="IF1A"/>
    <property type="match status" value="1"/>
</dbReference>
<dbReference type="PROSITE" id="PS50832">
    <property type="entry name" value="S1_IF1_TYPE"/>
    <property type="match status" value="1"/>
</dbReference>
<gene>
    <name evidence="1" type="primary">eif1a1</name>
    <name type="ordered locus">HQ_3399A</name>
</gene>
<accession>Q18EX1</accession>
<comment type="function">
    <text evidence="1">Seems to be required for maximal rate of protein biosynthesis. Enhances ribosome dissociation into subunits and stabilizes the binding of the initiator Met-tRNA(I) to 40 S ribosomal subunits.</text>
</comment>
<comment type="similarity">
    <text evidence="1">Belongs to the eIF-1A family.</text>
</comment>
<keyword id="KW-0396">Initiation factor</keyword>
<keyword id="KW-0648">Protein biosynthesis</keyword>
<keyword id="KW-1185">Reference proteome</keyword>
<sequence>MSDDENRGSHDLRMPDDDEVFAVVTNMLGANRVTVRCADGNERTARIPGRMQKRIWIREDDVVLVEPWDWQDEKGDITWRYEKSEADQLREEGRIR</sequence>